<keyword id="KW-0937">Abscisic acid biosynthesis</keyword>
<keyword id="KW-0150">Chloroplast</keyword>
<keyword id="KW-0274">FAD</keyword>
<keyword id="KW-0285">Flavoprotein</keyword>
<keyword id="KW-0472">Membrane</keyword>
<keyword id="KW-0560">Oxidoreductase</keyword>
<keyword id="KW-0934">Plastid</keyword>
<keyword id="KW-0346">Stress response</keyword>
<keyword id="KW-0793">Thylakoid</keyword>
<keyword id="KW-0809">Transit peptide</keyword>
<gene>
    <name type="primary">ABA2</name>
</gene>
<sequence>MYSTVFYTSVHPSTSAFSRKQLPLLISKDFPTELYHSLPCSRSLENGQIKKVKGVVKATIAEAPATIPPTDLKKVPQKKLKVLVAGGGIGGLVFALAAKKRGFDVLVFERDLSAIRGEGQYRGPIQIQSNALAALEAIDMDVAEDIMNAGCITGQRINGLVDGVSGNWYCKFDTFTPAVERGLPVTRVISRMTLQQNLARAVGEDIIMNESNVVNFEDDGEKVTVTLEDGQQYTGDLLVGADGIRSKVRTNLFGPSDVTYSGYTCYTGIADFVPADIETVGYRVFLGHKQYFVSSDVGGGKMQWYAFHNEPAGGVDDPNGKKARLLKIFEGWCDNVIDLLVATDEDAILRRDIYDRPPTFSWGKGRVTLLGDSVHAMQPNLGQGGCMAIEDSYQLALELDKALSRSAESGTPVDIISSLRSYESSRKLRVGVIHGLARMAAIMASTYKAYLGVGLGPLSFLTKFRIPHPGRVGGRFFIDLGMPLMLSWVLGGNGEKLEGRIQHCRLSEKANDQLRNWFEDDDALERATDAEWLLLPAGNSNAALETLVLSRDENMPCNIGSVSHANIPGKSVVIPLPQVSEMHARISYKGGAFFVTDLRSEHGTWITDNEGRRYRASPNFPTRFHPSDIIEFGSDKKAAFRVKVMKFPPKTAAKEERQAVGAA</sequence>
<proteinExistence type="evidence at protein level"/>
<protein>
    <recommendedName>
        <fullName>Zeaxanthin epoxidase, chloroplastic</fullName>
        <ecNumber>1.14.15.21</ecNumber>
    </recommendedName>
</protein>
<comment type="function">
    <text evidence="3 4">Converts zeaxanthin into antheraxanthin and subsequently violaxanthin. Involved in the epoxidation of zeaxanthin. Plays an important role in resistance to stresses, seed development and dormancy.</text>
</comment>
<comment type="catalytic activity">
    <reaction>
        <text>all-trans-zeaxanthin + 4 reduced [2Fe-2S]-[ferredoxin] + 2 O2 + 4 H(+) = all-trans-violaxanthin + 4 oxidized [2Fe-2S]-[ferredoxin] + 2 H2O</text>
        <dbReference type="Rhea" id="RHEA:32443"/>
        <dbReference type="Rhea" id="RHEA-COMP:10000"/>
        <dbReference type="Rhea" id="RHEA-COMP:10001"/>
        <dbReference type="ChEBI" id="CHEBI:15377"/>
        <dbReference type="ChEBI" id="CHEBI:15378"/>
        <dbReference type="ChEBI" id="CHEBI:15379"/>
        <dbReference type="ChEBI" id="CHEBI:27547"/>
        <dbReference type="ChEBI" id="CHEBI:33737"/>
        <dbReference type="ChEBI" id="CHEBI:33738"/>
        <dbReference type="ChEBI" id="CHEBI:35288"/>
        <dbReference type="EC" id="1.14.15.21"/>
    </reaction>
</comment>
<comment type="cofactor">
    <cofactor evidence="5">
        <name>FAD</name>
        <dbReference type="ChEBI" id="CHEBI:57692"/>
    </cofactor>
</comment>
<comment type="pathway">
    <text>Plant hormone biosynthesis; abscisate biosynthesis.</text>
</comment>
<comment type="subcellular location">
    <subcellularLocation>
        <location>Plastid</location>
        <location>Chloroplast membrane</location>
        <topology>Peripheral membrane protein</topology>
    </subcellularLocation>
    <subcellularLocation>
        <location>Plastid</location>
        <location>Chloroplast thylakoid membrane</location>
        <topology>Peripheral membrane protein</topology>
    </subcellularLocation>
</comment>
<comment type="tissue specificity">
    <text evidence="4">Higher expression in leaves than in roots.</text>
</comment>
<comment type="induction">
    <text evidence="4">By drought stress; in roots.</text>
</comment>
<feature type="transit peptide" description="Chloroplast" evidence="1">
    <location>
        <begin position="1"/>
        <end position="50"/>
    </location>
</feature>
<feature type="chain" id="PRO_0000020611" description="Zeaxanthin epoxidase, chloroplastic">
    <location>
        <begin position="51"/>
        <end position="663"/>
    </location>
</feature>
<feature type="domain" description="FHA" evidence="2">
    <location>
        <begin position="547"/>
        <end position="611"/>
    </location>
</feature>
<feature type="binding site" evidence="1">
    <location>
        <begin position="81"/>
        <end position="109"/>
    </location>
    <ligand>
        <name>FAD</name>
        <dbReference type="ChEBI" id="CHEBI:57692"/>
    </ligand>
</feature>
<feature type="binding site" evidence="1">
    <location>
        <begin position="359"/>
        <end position="372"/>
    </location>
    <ligand>
        <name>FAD</name>
        <dbReference type="ChEBI" id="CHEBI:57692"/>
    </ligand>
</feature>
<evidence type="ECO:0000255" key="1"/>
<evidence type="ECO:0000255" key="2">
    <source>
        <dbReference type="PROSITE-ProRule" id="PRU00086"/>
    </source>
</evidence>
<evidence type="ECO:0000269" key="3">
    <source>
    </source>
</evidence>
<evidence type="ECO:0000269" key="4">
    <source>
    </source>
</evidence>
<evidence type="ECO:0000305" key="5"/>
<accession>Q40412</accession>
<name>ABA2_NICPL</name>
<reference key="1">
    <citation type="journal article" date="1996" name="EMBO J.">
        <title>Molecular identification of zeaxanthin epoxidase of Nicotiana plumbaginifolia, a gene involved in abscisic acid biosynthesis and corresponding to the ABA locus of Arabidopsis thaliana.</title>
        <authorList>
            <person name="Marin E."/>
            <person name="Nussaume L."/>
            <person name="Quesada A."/>
            <person name="Gonneau M."/>
            <person name="Sotta B."/>
            <person name="Hugueney P."/>
            <person name="Frey A."/>
            <person name="Marion-Poll A."/>
        </authorList>
    </citation>
    <scope>NUCLEOTIDE SEQUENCE [MRNA]</scope>
    <scope>FUNCTION</scope>
    <scope>CHARACTERIZATION</scope>
    <source>
        <strain>cv. Viviani</strain>
        <tissue>Seedling</tissue>
    </source>
</reference>
<reference key="2">
    <citation type="journal article" date="1998" name="Plant Physiol.">
        <title>Expression studies of the zeaxanthin epoxidase gene in Nicotiana plumbaginifolia.</title>
        <authorList>
            <person name="Audran C."/>
            <person name="Borel C."/>
            <person name="Frey A."/>
            <person name="Sotta B."/>
            <person name="Meyer C."/>
            <person name="Simonneau T."/>
            <person name="Marion-Poll A."/>
        </authorList>
    </citation>
    <scope>CHARACTERIZATION</scope>
    <scope>FUNCTION</scope>
    <scope>INDUCTION</scope>
    <scope>TISSUE SPECIFICITY</scope>
    <source>
        <strain>cv. Viviani</strain>
    </source>
</reference>
<dbReference type="EC" id="1.14.15.21"/>
<dbReference type="EMBL" id="X95732">
    <property type="protein sequence ID" value="CAA65048.1"/>
    <property type="molecule type" value="mRNA"/>
</dbReference>
<dbReference type="PIR" id="S69548">
    <property type="entry name" value="S69548"/>
</dbReference>
<dbReference type="SMR" id="Q40412"/>
<dbReference type="BioCyc" id="MetaCyc:MONOMER-2602"/>
<dbReference type="BRENDA" id="1.14.15.21">
    <property type="organism ID" value="3640"/>
</dbReference>
<dbReference type="UniPathway" id="UPA00090"/>
<dbReference type="GO" id="GO:0031969">
    <property type="term" value="C:chloroplast membrane"/>
    <property type="evidence" value="ECO:0007669"/>
    <property type="project" value="UniProtKB-SubCell"/>
</dbReference>
<dbReference type="GO" id="GO:0009535">
    <property type="term" value="C:chloroplast thylakoid membrane"/>
    <property type="evidence" value="ECO:0007669"/>
    <property type="project" value="UniProtKB-SubCell"/>
</dbReference>
<dbReference type="GO" id="GO:0071949">
    <property type="term" value="F:FAD binding"/>
    <property type="evidence" value="ECO:0007669"/>
    <property type="project" value="InterPro"/>
</dbReference>
<dbReference type="GO" id="GO:0052662">
    <property type="term" value="F:zeaxanthin epoxidase activity"/>
    <property type="evidence" value="ECO:0007669"/>
    <property type="project" value="UniProtKB-EC"/>
</dbReference>
<dbReference type="GO" id="GO:0009688">
    <property type="term" value="P:abscisic acid biosynthetic process"/>
    <property type="evidence" value="ECO:0007669"/>
    <property type="project" value="UniProtKB-UniPathway"/>
</dbReference>
<dbReference type="CDD" id="cd22702">
    <property type="entry name" value="FHA_ZEP-like"/>
    <property type="match status" value="1"/>
</dbReference>
<dbReference type="Gene3D" id="2.60.200.20">
    <property type="match status" value="1"/>
</dbReference>
<dbReference type="Gene3D" id="3.50.50.60">
    <property type="entry name" value="FAD/NAD(P)-binding domain"/>
    <property type="match status" value="1"/>
</dbReference>
<dbReference type="InterPro" id="IPR002938">
    <property type="entry name" value="FAD-bd"/>
</dbReference>
<dbReference type="InterPro" id="IPR036188">
    <property type="entry name" value="FAD/NAD-bd_sf"/>
</dbReference>
<dbReference type="InterPro" id="IPR000253">
    <property type="entry name" value="FHA_dom"/>
</dbReference>
<dbReference type="InterPro" id="IPR008984">
    <property type="entry name" value="SMAD_FHA_dom_sf"/>
</dbReference>
<dbReference type="InterPro" id="IPR017079">
    <property type="entry name" value="Zeaxanthin_epoxidase"/>
</dbReference>
<dbReference type="PANTHER" id="PTHR46496">
    <property type="match status" value="1"/>
</dbReference>
<dbReference type="PANTHER" id="PTHR46496:SF1">
    <property type="entry name" value="ZEAXANTHIN EPOXIDASE, CHLOROPLASTIC"/>
    <property type="match status" value="1"/>
</dbReference>
<dbReference type="Pfam" id="PF01494">
    <property type="entry name" value="FAD_binding_3"/>
    <property type="match status" value="2"/>
</dbReference>
<dbReference type="Pfam" id="PF00498">
    <property type="entry name" value="FHA"/>
    <property type="match status" value="1"/>
</dbReference>
<dbReference type="PIRSF" id="PIRSF036989">
    <property type="entry name" value="Zeaxanthin_epoxidase"/>
    <property type="match status" value="1"/>
</dbReference>
<dbReference type="PRINTS" id="PR00420">
    <property type="entry name" value="RNGMNOXGNASE"/>
</dbReference>
<dbReference type="SMART" id="SM00240">
    <property type="entry name" value="FHA"/>
    <property type="match status" value="1"/>
</dbReference>
<dbReference type="SUPFAM" id="SSF51905">
    <property type="entry name" value="FAD/NAD(P)-binding domain"/>
    <property type="match status" value="1"/>
</dbReference>
<dbReference type="SUPFAM" id="SSF49879">
    <property type="entry name" value="SMAD/FHA domain"/>
    <property type="match status" value="1"/>
</dbReference>
<dbReference type="PROSITE" id="PS50006">
    <property type="entry name" value="FHA_DOMAIN"/>
    <property type="match status" value="1"/>
</dbReference>
<organism>
    <name type="scientific">Nicotiana plumbaginifolia</name>
    <name type="common">Leadwort-leaved tobacco</name>
    <name type="synonym">Tex-Mex tobacco</name>
    <dbReference type="NCBI Taxonomy" id="4092"/>
    <lineage>
        <taxon>Eukaryota</taxon>
        <taxon>Viridiplantae</taxon>
        <taxon>Streptophyta</taxon>
        <taxon>Embryophyta</taxon>
        <taxon>Tracheophyta</taxon>
        <taxon>Spermatophyta</taxon>
        <taxon>Magnoliopsida</taxon>
        <taxon>eudicotyledons</taxon>
        <taxon>Gunneridae</taxon>
        <taxon>Pentapetalae</taxon>
        <taxon>asterids</taxon>
        <taxon>lamiids</taxon>
        <taxon>Solanales</taxon>
        <taxon>Solanaceae</taxon>
        <taxon>Nicotianoideae</taxon>
        <taxon>Nicotianeae</taxon>
        <taxon>Nicotiana</taxon>
    </lineage>
</organism>